<gene>
    <name type="ordered locus">YAL064W-B</name>
</gene>
<organism>
    <name type="scientific">Saccharomyces cerevisiae (strain ATCC 204508 / S288c)</name>
    <name type="common">Baker's yeast</name>
    <dbReference type="NCBI Taxonomy" id="559292"/>
    <lineage>
        <taxon>Eukaryota</taxon>
        <taxon>Fungi</taxon>
        <taxon>Dikarya</taxon>
        <taxon>Ascomycota</taxon>
        <taxon>Saccharomycotina</taxon>
        <taxon>Saccharomycetes</taxon>
        <taxon>Saccharomycetales</taxon>
        <taxon>Saccharomycetaceae</taxon>
        <taxon>Saccharomyces</taxon>
    </lineage>
</organism>
<dbReference type="EMBL" id="U12980">
    <property type="protein sequence ID" value="AAC05010.1"/>
    <property type="molecule type" value="Genomic_DNA"/>
</dbReference>
<dbReference type="EMBL" id="BK006935">
    <property type="protein sequence ID" value="DAA06922.1"/>
    <property type="molecule type" value="Genomic_DNA"/>
</dbReference>
<dbReference type="RefSeq" id="NP_009336.1">
    <property type="nucleotide sequence ID" value="NM_001180042.1"/>
</dbReference>
<dbReference type="BioGRID" id="31764">
    <property type="interactions" value="3"/>
</dbReference>
<dbReference type="DIP" id="DIP-8741N"/>
<dbReference type="FunCoup" id="O13512">
    <property type="interactions" value="22"/>
</dbReference>
<dbReference type="STRING" id="4932.YAL064W-B"/>
<dbReference type="PaxDb" id="4932-YAL064W-B"/>
<dbReference type="EnsemblFungi" id="YAL064W-B_mRNA">
    <property type="protein sequence ID" value="YAL064W-B"/>
    <property type="gene ID" value="YAL064W-B"/>
</dbReference>
<dbReference type="GeneID" id="851233"/>
<dbReference type="KEGG" id="sce:YAL064W-B"/>
<dbReference type="AGR" id="SGD:S000002141"/>
<dbReference type="SGD" id="S000002141">
    <property type="gene designation" value="YAL064W-B"/>
</dbReference>
<dbReference type="VEuPathDB" id="FungiDB:YAL064W-B"/>
<dbReference type="HOGENOM" id="CLU_162196_0_0_1"/>
<dbReference type="InParanoid" id="O13512"/>
<dbReference type="BioCyc" id="YEAST:G3O-28893-MONOMER"/>
<dbReference type="PRO" id="PR:O13512"/>
<dbReference type="Proteomes" id="UP000002311">
    <property type="component" value="Chromosome I"/>
</dbReference>
<dbReference type="RNAct" id="O13512">
    <property type="molecule type" value="protein"/>
</dbReference>
<dbReference type="GO" id="GO:0005783">
    <property type="term" value="C:endoplasmic reticulum"/>
    <property type="evidence" value="ECO:0007005"/>
    <property type="project" value="SGD"/>
</dbReference>
<dbReference type="GO" id="GO:0016020">
    <property type="term" value="C:membrane"/>
    <property type="evidence" value="ECO:0007669"/>
    <property type="project" value="UniProtKB-SubCell"/>
</dbReference>
<protein>
    <recommendedName>
        <fullName>Uncharacterized membrane protein YAL064W-B</fullName>
    </recommendedName>
</protein>
<comment type="subcellular location">
    <subcellularLocation>
        <location>Membrane</location>
        <topology>Multi-pass membrane protein</topology>
    </subcellularLocation>
</comment>
<evidence type="ECO:0000255" key="1"/>
<feature type="chain" id="PRO_0000248429" description="Uncharacterized membrane protein YAL064W-B">
    <location>
        <begin position="1"/>
        <end position="126"/>
    </location>
</feature>
<feature type="topological domain" description="Cytoplasmic" evidence="1">
    <location>
        <begin position="1"/>
        <end position="28"/>
    </location>
</feature>
<feature type="transmembrane region" description="Helical" evidence="1">
    <location>
        <begin position="29"/>
        <end position="49"/>
    </location>
</feature>
<feature type="topological domain" description="Extracellular" evidence="1">
    <location>
        <begin position="50"/>
        <end position="75"/>
    </location>
</feature>
<feature type="transmembrane region" description="Helical" evidence="1">
    <location>
        <begin position="76"/>
        <end position="96"/>
    </location>
</feature>
<feature type="topological domain" description="Cytoplasmic" evidence="1">
    <location>
        <position position="97"/>
    </location>
</feature>
<feature type="transmembrane region" description="Helical" evidence="1">
    <location>
        <begin position="98"/>
        <end position="118"/>
    </location>
</feature>
<feature type="topological domain" description="Extracellular" evidence="1">
    <location>
        <begin position="119"/>
        <end position="126"/>
    </location>
</feature>
<reference key="1">
    <citation type="journal article" date="1995" name="Proc. Natl. Acad. Sci. U.S.A.">
        <title>The nucleotide sequence of chromosome I from Saccharomyces cerevisiae.</title>
        <authorList>
            <person name="Bussey H."/>
            <person name="Kaback D.B."/>
            <person name="Zhong W.-W."/>
            <person name="Vo D.H."/>
            <person name="Clark M.W."/>
            <person name="Fortin N."/>
            <person name="Hall J."/>
            <person name="Ouellette B.F.F."/>
            <person name="Keng T."/>
            <person name="Barton A.B."/>
            <person name="Su Y."/>
            <person name="Davies C.J."/>
            <person name="Storms R.K."/>
        </authorList>
    </citation>
    <scope>NUCLEOTIDE SEQUENCE [LARGE SCALE GENOMIC DNA]</scope>
    <source>
        <strain>ATCC 204508 / S288c</strain>
    </source>
</reference>
<reference key="2">
    <citation type="journal article" date="2014" name="G3 (Bethesda)">
        <title>The reference genome sequence of Saccharomyces cerevisiae: Then and now.</title>
        <authorList>
            <person name="Engel S.R."/>
            <person name="Dietrich F.S."/>
            <person name="Fisk D.G."/>
            <person name="Binkley G."/>
            <person name="Balakrishnan R."/>
            <person name="Costanzo M.C."/>
            <person name="Dwight S.S."/>
            <person name="Hitz B.C."/>
            <person name="Karra K."/>
            <person name="Nash R.S."/>
            <person name="Weng S."/>
            <person name="Wong E.D."/>
            <person name="Lloyd P."/>
            <person name="Skrzypek M.S."/>
            <person name="Miyasato S.R."/>
            <person name="Simison M."/>
            <person name="Cherry J.M."/>
        </authorList>
    </citation>
    <scope>GENOME REANNOTATION</scope>
    <source>
        <strain>ATCC 204508 / S288c</strain>
    </source>
</reference>
<reference key="3">
    <citation type="journal article" date="2006" name="Proc. Natl. Acad. Sci. U.S.A.">
        <title>A global topology map of the Saccharomyces cerevisiae membrane proteome.</title>
        <authorList>
            <person name="Kim H."/>
            <person name="Melen K."/>
            <person name="Oesterberg M."/>
            <person name="von Heijne G."/>
        </authorList>
    </citation>
    <scope>TOPOLOGY [LARGE SCALE ANALYSIS]</scope>
    <source>
        <strain>ATCC 208353 / W303-1A</strain>
    </source>
</reference>
<keyword id="KW-0472">Membrane</keyword>
<keyword id="KW-1185">Reference proteome</keyword>
<keyword id="KW-0812">Transmembrane</keyword>
<keyword id="KW-1133">Transmembrane helix</keyword>
<accession>O13512</accession>
<accession>D6VPF2</accession>
<name>YA64B_YEAST</name>
<sequence>MAGEAVSEHTPDSQEVTVTSVVCCLDSVVEIGHHVVYSVVTPLIVAVLIDTMAGEAVLEHTSDSQEEIVTTVVCSVVPLVCFVVSVVCFVISVVEIGHHVVYSVVAPLTVTVAVETIAEEMDSVHT</sequence>
<proteinExistence type="evidence at protein level"/>